<gene>
    <name evidence="1" type="primary">secB</name>
    <name type="ordered locus">RHE_CH00006</name>
</gene>
<comment type="function">
    <text evidence="1">One of the proteins required for the normal export of preproteins out of the cell cytoplasm. It is a molecular chaperone that binds to a subset of precursor proteins, maintaining them in a translocation-competent state. It also specifically binds to its receptor SecA.</text>
</comment>
<comment type="subunit">
    <text evidence="1">Homotetramer, a dimer of dimers. One homotetramer interacts with 1 SecA dimer.</text>
</comment>
<comment type="subcellular location">
    <subcellularLocation>
        <location evidence="1">Cytoplasm</location>
    </subcellularLocation>
</comment>
<comment type="similarity">
    <text evidence="1">Belongs to the SecB family.</text>
</comment>
<name>SECB_RHIEC</name>
<sequence>MADDNNSNGATNPTLSILAQYTKDLSFENPGAPRSLQARDKAPTININVNVNANPLSDTDFDVVLSLNAEAKDGDKTVFHTELVYGGVFRVAGFPQEHMLPVLFIECPRMLFPFARQIIADVTRNGGFPPLMIDPIDFTQMFAQRVAEEQARAKVQAVPN</sequence>
<dbReference type="EMBL" id="CP000133">
    <property type="protein sequence ID" value="ABC88840.1"/>
    <property type="molecule type" value="Genomic_DNA"/>
</dbReference>
<dbReference type="RefSeq" id="WP_011423412.1">
    <property type="nucleotide sequence ID" value="NC_007761.1"/>
</dbReference>
<dbReference type="SMR" id="Q2KE96"/>
<dbReference type="GeneID" id="66144194"/>
<dbReference type="KEGG" id="ret:RHE_CH00006"/>
<dbReference type="eggNOG" id="COG1952">
    <property type="taxonomic scope" value="Bacteria"/>
</dbReference>
<dbReference type="HOGENOM" id="CLU_111574_0_0_5"/>
<dbReference type="OrthoDB" id="9795145at2"/>
<dbReference type="Proteomes" id="UP000001936">
    <property type="component" value="Chromosome"/>
</dbReference>
<dbReference type="GO" id="GO:0005737">
    <property type="term" value="C:cytoplasm"/>
    <property type="evidence" value="ECO:0007669"/>
    <property type="project" value="UniProtKB-SubCell"/>
</dbReference>
<dbReference type="GO" id="GO:0051082">
    <property type="term" value="F:unfolded protein binding"/>
    <property type="evidence" value="ECO:0007669"/>
    <property type="project" value="InterPro"/>
</dbReference>
<dbReference type="GO" id="GO:0006457">
    <property type="term" value="P:protein folding"/>
    <property type="evidence" value="ECO:0007669"/>
    <property type="project" value="UniProtKB-UniRule"/>
</dbReference>
<dbReference type="GO" id="GO:0051262">
    <property type="term" value="P:protein tetramerization"/>
    <property type="evidence" value="ECO:0007669"/>
    <property type="project" value="InterPro"/>
</dbReference>
<dbReference type="GO" id="GO:0015031">
    <property type="term" value="P:protein transport"/>
    <property type="evidence" value="ECO:0007669"/>
    <property type="project" value="UniProtKB-UniRule"/>
</dbReference>
<dbReference type="Gene3D" id="3.10.420.10">
    <property type="entry name" value="SecB-like"/>
    <property type="match status" value="1"/>
</dbReference>
<dbReference type="HAMAP" id="MF_00821">
    <property type="entry name" value="SecB"/>
    <property type="match status" value="1"/>
</dbReference>
<dbReference type="InterPro" id="IPR003708">
    <property type="entry name" value="SecB"/>
</dbReference>
<dbReference type="InterPro" id="IPR035958">
    <property type="entry name" value="SecB-like_sf"/>
</dbReference>
<dbReference type="NCBIfam" id="NF004392">
    <property type="entry name" value="PRK05751.1-3"/>
    <property type="match status" value="1"/>
</dbReference>
<dbReference type="NCBIfam" id="TIGR00809">
    <property type="entry name" value="secB"/>
    <property type="match status" value="1"/>
</dbReference>
<dbReference type="PANTHER" id="PTHR36918">
    <property type="match status" value="1"/>
</dbReference>
<dbReference type="PANTHER" id="PTHR36918:SF1">
    <property type="entry name" value="PROTEIN-EXPORT PROTEIN SECB"/>
    <property type="match status" value="1"/>
</dbReference>
<dbReference type="Pfam" id="PF02556">
    <property type="entry name" value="SecB"/>
    <property type="match status" value="1"/>
</dbReference>
<dbReference type="PRINTS" id="PR01594">
    <property type="entry name" value="SECBCHAPRONE"/>
</dbReference>
<dbReference type="SUPFAM" id="SSF54611">
    <property type="entry name" value="SecB-like"/>
    <property type="match status" value="1"/>
</dbReference>
<accession>Q2KE96</accession>
<organism>
    <name type="scientific">Rhizobium etli (strain ATCC 51251 / DSM 11541 / JCM 21823 / NBRC 15573 / CFN 42)</name>
    <dbReference type="NCBI Taxonomy" id="347834"/>
    <lineage>
        <taxon>Bacteria</taxon>
        <taxon>Pseudomonadati</taxon>
        <taxon>Pseudomonadota</taxon>
        <taxon>Alphaproteobacteria</taxon>
        <taxon>Hyphomicrobiales</taxon>
        <taxon>Rhizobiaceae</taxon>
        <taxon>Rhizobium/Agrobacterium group</taxon>
        <taxon>Rhizobium</taxon>
    </lineage>
</organism>
<feature type="chain" id="PRO_1000062502" description="Protein-export protein SecB">
    <location>
        <begin position="1"/>
        <end position="160"/>
    </location>
</feature>
<reference key="1">
    <citation type="journal article" date="2006" name="Proc. Natl. Acad. Sci. U.S.A.">
        <title>The partitioned Rhizobium etli genome: genetic and metabolic redundancy in seven interacting replicons.</title>
        <authorList>
            <person name="Gonzalez V."/>
            <person name="Santamaria R.I."/>
            <person name="Bustos P."/>
            <person name="Hernandez-Gonzalez I."/>
            <person name="Medrano-Soto A."/>
            <person name="Moreno-Hagelsieb G."/>
            <person name="Janga S.C."/>
            <person name="Ramirez M.A."/>
            <person name="Jimenez-Jacinto V."/>
            <person name="Collado-Vides J."/>
            <person name="Davila G."/>
        </authorList>
    </citation>
    <scope>NUCLEOTIDE SEQUENCE [LARGE SCALE GENOMIC DNA]</scope>
    <source>
        <strain>ATCC 51251 / DSM 11541 / JCM 21823 / NBRC 15573 / CFN 42</strain>
    </source>
</reference>
<keyword id="KW-0143">Chaperone</keyword>
<keyword id="KW-0963">Cytoplasm</keyword>
<keyword id="KW-0653">Protein transport</keyword>
<keyword id="KW-1185">Reference proteome</keyword>
<keyword id="KW-0811">Translocation</keyword>
<keyword id="KW-0813">Transport</keyword>
<evidence type="ECO:0000255" key="1">
    <source>
        <dbReference type="HAMAP-Rule" id="MF_00821"/>
    </source>
</evidence>
<proteinExistence type="inferred from homology"/>
<protein>
    <recommendedName>
        <fullName evidence="1">Protein-export protein SecB</fullName>
    </recommendedName>
</protein>